<name>MATK_MOUSE</name>
<reference key="1">
    <citation type="journal article" date="1994" name="Proc. Natl. Acad. Sci. U.S.A.">
        <title>Ctk: a protein-tyrosine kinase related to Csk that defines an enzyme family.</title>
        <authorList>
            <person name="Klages S."/>
            <person name="Adam D."/>
            <person name="Class K."/>
            <person name="Fargnoli J."/>
            <person name="Bolen J.B."/>
            <person name="Penhallow R.C."/>
        </authorList>
    </citation>
    <scope>NUCLEOTIDE SEQUENCE [MRNA] (ISOFORM 3)</scope>
    <source>
        <tissue>Brain</tissue>
    </source>
</reference>
<reference key="2">
    <citation type="journal article" date="1994" name="Proc. Natl. Acad. Sci. U.S.A.">
        <title>Ntk: a Csk-related protein-tyrosine kinase expressed in brain and T lymphocytes.</title>
        <authorList>
            <person name="Chow L.M.L."/>
            <person name="Jarvis C.D."/>
            <person name="Hu Q."/>
            <person name="Nye S.H."/>
            <person name="Gervais F.G."/>
            <person name="Veillette A."/>
            <person name="Matis L.A."/>
        </authorList>
    </citation>
    <scope>NUCLEOTIDE SEQUENCE [MRNA] (ISOFORM 1)</scope>
    <source>
        <strain>BALB/cJ</strain>
        <tissue>Thymus</tissue>
    </source>
</reference>
<reference key="3">
    <citation type="journal article" date="1995" name="Oncogene">
        <title>Presence of alternative 5' untranslated sequences and identification of cells expressing ctk transcripts in the brain and testis.</title>
        <authorList>
            <person name="Kaneko Y."/>
            <person name="Nonoguchi K."/>
            <person name="Fukuyama H."/>
            <person name="Takano S."/>
            <person name="Higashitsuji H."/>
            <person name="Nishiyama H."/>
            <person name="Takenawa J."/>
            <person name="Nakayama H."/>
            <person name="Fujita J."/>
        </authorList>
    </citation>
    <scope>NUCLEOTIDE SEQUENCE [MRNA] (ISOFORM 3)</scope>
    <source>
        <strain>DDY/STD</strain>
    </source>
</reference>
<reference key="4">
    <citation type="journal article" date="1994" name="Oncogene">
        <title>Two distinct protein isoforms are encoded by ntk, a csk-related tyrosine protein kinase gene.</title>
        <authorList>
            <person name="Chow L.M."/>
            <person name="Davidson D."/>
            <person name="Fournel M."/>
            <person name="Gosselin P."/>
            <person name="Lemieux S."/>
            <person name="Lyu M.S."/>
            <person name="Kozak C.A."/>
            <person name="Matis L.A."/>
            <person name="Veillette A."/>
        </authorList>
    </citation>
    <scope>NUCLEOTIDE SEQUENCE [GENOMIC DNA] OF 1-43 (ISOFORM 1)</scope>
    <scope>ALTERNATIVE SPLICING</scope>
    <scope>SUBCELLULAR LOCATION</scope>
    <source>
        <strain>129/Sv</strain>
        <tissue>Kidney</tissue>
    </source>
</reference>
<reference key="5">
    <citation type="journal article" date="2010" name="Cell">
        <title>A tissue-specific atlas of mouse protein phosphorylation and expression.</title>
        <authorList>
            <person name="Huttlin E.L."/>
            <person name="Jedrychowski M.P."/>
            <person name="Elias J.E."/>
            <person name="Goswami T."/>
            <person name="Rad R."/>
            <person name="Beausoleil S.A."/>
            <person name="Villen J."/>
            <person name="Haas W."/>
            <person name="Sowa M.E."/>
            <person name="Gygi S.P."/>
        </authorList>
    </citation>
    <scope>IDENTIFICATION BY MASS SPECTROMETRY [LARGE SCALE ANALYSIS]</scope>
    <source>
        <tissue>Brain</tissue>
        <tissue>Spleen</tissue>
    </source>
</reference>
<accession>P41242</accession>
<accession>Q6LE90</accession>
<protein>
    <recommendedName>
        <fullName>Megakaryocyte-associated tyrosine-protein kinase</fullName>
        <ecNumber>2.7.10.2</ecNumber>
    </recommendedName>
    <alternativeName>
        <fullName>Protein kinase NTK</fullName>
    </alternativeName>
    <alternativeName>
        <fullName>Tyrosine-protein kinase CTK</fullName>
    </alternativeName>
</protein>
<keyword id="KW-0025">Alternative splicing</keyword>
<keyword id="KW-0067">ATP-binding</keyword>
<keyword id="KW-0963">Cytoplasm</keyword>
<keyword id="KW-0418">Kinase</keyword>
<keyword id="KW-0472">Membrane</keyword>
<keyword id="KW-0547">Nucleotide-binding</keyword>
<keyword id="KW-1185">Reference proteome</keyword>
<keyword id="KW-0727">SH2 domain</keyword>
<keyword id="KW-0728">SH3 domain</keyword>
<keyword id="KW-0808">Transferase</keyword>
<keyword id="KW-0829">Tyrosine-protein kinase</keyword>
<organism>
    <name type="scientific">Mus musculus</name>
    <name type="common">Mouse</name>
    <dbReference type="NCBI Taxonomy" id="10090"/>
    <lineage>
        <taxon>Eukaryota</taxon>
        <taxon>Metazoa</taxon>
        <taxon>Chordata</taxon>
        <taxon>Craniata</taxon>
        <taxon>Vertebrata</taxon>
        <taxon>Euteleostomi</taxon>
        <taxon>Mammalia</taxon>
        <taxon>Eutheria</taxon>
        <taxon>Euarchontoglires</taxon>
        <taxon>Glires</taxon>
        <taxon>Rodentia</taxon>
        <taxon>Myomorpha</taxon>
        <taxon>Muroidea</taxon>
        <taxon>Muridae</taxon>
        <taxon>Murinae</taxon>
        <taxon>Mus</taxon>
        <taxon>Mus</taxon>
    </lineage>
</organism>
<feature type="chain" id="PRO_0000088074" description="Megakaryocyte-associated tyrosine-protein kinase">
    <location>
        <begin position="1"/>
        <end position="505"/>
    </location>
</feature>
<feature type="domain" description="SH3" evidence="4">
    <location>
        <begin position="46"/>
        <end position="108"/>
    </location>
</feature>
<feature type="domain" description="SH2" evidence="3">
    <location>
        <begin position="120"/>
        <end position="209"/>
    </location>
</feature>
<feature type="domain" description="Protein kinase" evidence="2">
    <location>
        <begin position="233"/>
        <end position="481"/>
    </location>
</feature>
<feature type="region of interest" description="Disordered" evidence="6">
    <location>
        <begin position="483"/>
        <end position="505"/>
    </location>
</feature>
<feature type="active site" description="Proton acceptor" evidence="2 5">
    <location>
        <position position="350"/>
    </location>
</feature>
<feature type="binding site" evidence="2">
    <location>
        <begin position="239"/>
        <end position="247"/>
    </location>
    <ligand>
        <name>ATP</name>
        <dbReference type="ChEBI" id="CHEBI:30616"/>
    </ligand>
</feature>
<feature type="binding site" evidence="2">
    <location>
        <position position="260"/>
    </location>
    <ligand>
        <name>ATP</name>
        <dbReference type="ChEBI" id="CHEBI:30616"/>
    </ligand>
</feature>
<feature type="splice variant" id="VSP_011565" description="In isoform 3." evidence="8 9">
    <location>
        <begin position="1"/>
        <end position="40"/>
    </location>
</feature>
<feature type="splice variant" id="VSP_004966" description="In isoform 2." evidence="10">
    <original>T</original>
    <variation>TQ</variation>
    <location>
        <position position="43"/>
    </location>
</feature>
<feature type="sequence conflict" description="In Ref. 2 and 3." evidence="10" ref="2 3">
    <original>HG</original>
    <variation>QR</variation>
    <location>
        <begin position="105"/>
        <end position="106"/>
    </location>
</feature>
<comment type="function">
    <text>Could play a significant role in the signal transduction of hematopoietic cells. May regulate tyrosine kinase activity of SRC-family members in brain by specifically phosphorylating their C-terminal regulatory tyrosine residue which acts as a negative regulatory site. It may play an inhibitory role in the control of T-cell proliferation.</text>
</comment>
<comment type="catalytic activity">
    <reaction evidence="5">
        <text>L-tyrosyl-[protein] + ATP = O-phospho-L-tyrosyl-[protein] + ADP + H(+)</text>
        <dbReference type="Rhea" id="RHEA:10596"/>
        <dbReference type="Rhea" id="RHEA-COMP:10136"/>
        <dbReference type="Rhea" id="RHEA-COMP:20101"/>
        <dbReference type="ChEBI" id="CHEBI:15378"/>
        <dbReference type="ChEBI" id="CHEBI:30616"/>
        <dbReference type="ChEBI" id="CHEBI:46858"/>
        <dbReference type="ChEBI" id="CHEBI:61978"/>
        <dbReference type="ChEBI" id="CHEBI:456216"/>
        <dbReference type="EC" id="2.7.10.2"/>
    </reaction>
</comment>
<comment type="subunit">
    <text evidence="1">Interacts with KIT.</text>
</comment>
<comment type="subcellular location">
    <subcellularLocation>
        <location evidence="7">Cytoplasm</location>
    </subcellularLocation>
    <subcellularLocation>
        <location evidence="1">Membrane</location>
    </subcellularLocation>
    <text evidence="1">In platelets, 90% of MATK localizes to the membrane fraction, and translocates to the cytoskeleton upon thrombin stimulation.</text>
</comment>
<comment type="alternative products">
    <event type="alternative splicing"/>
    <isoform>
        <id>P41242-1</id>
        <name>1</name>
        <sequence type="displayed"/>
    </isoform>
    <isoform>
        <id>P41242-2</id>
        <name>2</name>
        <sequence type="described" ref="VSP_004966"/>
    </isoform>
    <isoform>
        <id>P41242-3</id>
        <name>3</name>
        <sequence type="described" ref="VSP_011565"/>
    </isoform>
</comment>
<comment type="tissue specificity">
    <text>Most abundant in brain, and to a lesser extent in the spleen, the thymus and the liver. Also found in the T-cell lineage.</text>
</comment>
<comment type="miscellaneous">
    <molecule>Isoform 2</molecule>
    <text evidence="10">Minor isoform.</text>
</comment>
<comment type="similarity">
    <text evidence="2">Belongs to the protein kinase superfamily. Tyr protein kinase family. CSK subfamily.</text>
</comment>
<evidence type="ECO:0000250" key="1"/>
<evidence type="ECO:0000255" key="2">
    <source>
        <dbReference type="PROSITE-ProRule" id="PRU00159"/>
    </source>
</evidence>
<evidence type="ECO:0000255" key="3">
    <source>
        <dbReference type="PROSITE-ProRule" id="PRU00191"/>
    </source>
</evidence>
<evidence type="ECO:0000255" key="4">
    <source>
        <dbReference type="PROSITE-ProRule" id="PRU00192"/>
    </source>
</evidence>
<evidence type="ECO:0000255" key="5">
    <source>
        <dbReference type="PROSITE-ProRule" id="PRU10028"/>
    </source>
</evidence>
<evidence type="ECO:0000256" key="6">
    <source>
        <dbReference type="SAM" id="MobiDB-lite"/>
    </source>
</evidence>
<evidence type="ECO:0000269" key="7">
    <source>
    </source>
</evidence>
<evidence type="ECO:0000303" key="8">
    <source>
    </source>
</evidence>
<evidence type="ECO:0000303" key="9">
    <source>
    </source>
</evidence>
<evidence type="ECO:0000305" key="10"/>
<gene>
    <name type="primary">Matk</name>
    <name type="synonym">Ctk</name>
    <name type="synonym">Ntk</name>
</gene>
<proteinExistence type="evidence at protein level"/>
<sequence>MARRSSRVSWLAFEGWESRDLPRVSPRLFGAWHPAPAAARMPTRWAPGTQCMTKCENSRPKPGELAFRKGDMVTILEACEDKSWYRAKHHGSGQEGLLAAAALRHGEALSTDPKLSLMPWFHGKISGQEAIQQLQPPEDGLFLVRESARHPGDYVLCVSFGRDVIHYRVLHRDGHLTIDEAVCFCNLMDMVEHYTKDKGAICTKLVKPRRKQGAKSAEEELAKAGWLLDLQHLTLGAQIGEGEFGAVLQGEYLGQKVAVKNIKCDVTAQAFLDETAVMTKLQHRNLVRLLGVILHHGLYIVMEHVSKGNLVNFLRTRGRALVSTSQLLQFALHVAEGMEYLESKKLVHRDLAARNILVSEDLVAKVSDFGLAKAERKGLDSSRLPVKWTAPEALKNGRFSSKSDVWSFGVLLWEVFSYGRAPYPKMSLKEVSEAVEKGYRMEPPDGCPGSVHTLMGSCWEAEPARRPPFRKIVEKLGRELRSVGVSAPAGGQEAEGSAPTRSQDP</sequence>
<dbReference type="EC" id="2.7.10.2"/>
<dbReference type="EMBL" id="U05210">
    <property type="protein sequence ID" value="AAA18829.1"/>
    <property type="molecule type" value="mRNA"/>
</dbReference>
<dbReference type="EMBL" id="L27738">
    <property type="protein sequence ID" value="AAB59677.1"/>
    <property type="molecule type" value="mRNA"/>
</dbReference>
<dbReference type="EMBL" id="D45243">
    <property type="protein sequence ID" value="BAA08199.1"/>
    <property type="molecule type" value="mRNA"/>
</dbReference>
<dbReference type="EMBL" id="L33339">
    <property type="protein sequence ID" value="AAA64431.1"/>
    <property type="molecule type" value="Genomic_DNA"/>
</dbReference>
<dbReference type="CCDS" id="CCDS24048.1">
    <molecule id="P41242-1"/>
</dbReference>
<dbReference type="CCDS" id="CCDS70078.1">
    <molecule id="P41242-3"/>
</dbReference>
<dbReference type="PIR" id="I48926">
    <property type="entry name" value="I48926"/>
</dbReference>
<dbReference type="PIR" id="I59296">
    <property type="entry name" value="I59296"/>
</dbReference>
<dbReference type="RefSeq" id="NP_001272783.1">
    <property type="nucleotide sequence ID" value="NM_001285854.1"/>
</dbReference>
<dbReference type="RefSeq" id="NP_001272784.1">
    <property type="nucleotide sequence ID" value="NM_001285855.1"/>
</dbReference>
<dbReference type="RefSeq" id="NP_034898.1">
    <property type="nucleotide sequence ID" value="NM_010768.2"/>
</dbReference>
<dbReference type="RefSeq" id="XP_006513362.1">
    <property type="nucleotide sequence ID" value="XM_006513299.2"/>
</dbReference>
<dbReference type="BMRB" id="P41242"/>
<dbReference type="SMR" id="P41242"/>
<dbReference type="BioGRID" id="201319">
    <property type="interactions" value="12"/>
</dbReference>
<dbReference type="FunCoup" id="P41242">
    <property type="interactions" value="115"/>
</dbReference>
<dbReference type="STRING" id="10090.ENSMUSP00000113221"/>
<dbReference type="iPTMnet" id="P41242"/>
<dbReference type="PhosphoSitePlus" id="P41242"/>
<dbReference type="PaxDb" id="10090-ENSMUSP00000113221"/>
<dbReference type="ProteomicsDB" id="292092">
    <molecule id="P41242-1"/>
</dbReference>
<dbReference type="ProteomicsDB" id="292093">
    <molecule id="P41242-2"/>
</dbReference>
<dbReference type="ProteomicsDB" id="292094">
    <molecule id="P41242-3"/>
</dbReference>
<dbReference type="DNASU" id="17179"/>
<dbReference type="GeneID" id="17179"/>
<dbReference type="KEGG" id="mmu:17179"/>
<dbReference type="UCSC" id="uc007ggv.2">
    <molecule id="P41242-1"/>
    <property type="organism name" value="mouse"/>
</dbReference>
<dbReference type="AGR" id="MGI:99259"/>
<dbReference type="CTD" id="4145"/>
<dbReference type="MGI" id="MGI:99259">
    <property type="gene designation" value="Matk"/>
</dbReference>
<dbReference type="eggNOG" id="KOG0197">
    <property type="taxonomic scope" value="Eukaryota"/>
</dbReference>
<dbReference type="InParanoid" id="P41242"/>
<dbReference type="OrthoDB" id="346907at2759"/>
<dbReference type="PhylomeDB" id="P41242"/>
<dbReference type="TreeFam" id="TF351634"/>
<dbReference type="BRENDA" id="2.7.10.2">
    <property type="organism ID" value="3474"/>
</dbReference>
<dbReference type="Reactome" id="R-MMU-8863795">
    <property type="pathway name" value="Downregulation of ERBB2 signaling"/>
</dbReference>
<dbReference type="BioGRID-ORCS" id="17179">
    <property type="hits" value="1 hit in 79 CRISPR screens"/>
</dbReference>
<dbReference type="PRO" id="PR:P41242"/>
<dbReference type="Proteomes" id="UP000000589">
    <property type="component" value="Unplaced"/>
</dbReference>
<dbReference type="RNAct" id="P41242">
    <property type="molecule type" value="protein"/>
</dbReference>
<dbReference type="GO" id="GO:0005737">
    <property type="term" value="C:cytoplasm"/>
    <property type="evidence" value="ECO:0007669"/>
    <property type="project" value="UniProtKB-SubCell"/>
</dbReference>
<dbReference type="GO" id="GO:0016020">
    <property type="term" value="C:membrane"/>
    <property type="evidence" value="ECO:0007669"/>
    <property type="project" value="UniProtKB-SubCell"/>
</dbReference>
<dbReference type="GO" id="GO:0005524">
    <property type="term" value="F:ATP binding"/>
    <property type="evidence" value="ECO:0007669"/>
    <property type="project" value="UniProtKB-KW"/>
</dbReference>
<dbReference type="GO" id="GO:0004715">
    <property type="term" value="F:non-membrane spanning protein tyrosine kinase activity"/>
    <property type="evidence" value="ECO:0007669"/>
    <property type="project" value="UniProtKB-EC"/>
</dbReference>
<dbReference type="CDD" id="cd09937">
    <property type="entry name" value="SH2_csk_like"/>
    <property type="match status" value="1"/>
</dbReference>
<dbReference type="FunFam" id="1.10.510.10:FF:000376">
    <property type="entry name" value="Tyrosine-protein kinase"/>
    <property type="match status" value="1"/>
</dbReference>
<dbReference type="FunFam" id="2.30.30.40:FF:000145">
    <property type="entry name" value="Tyrosine-protein kinase"/>
    <property type="match status" value="1"/>
</dbReference>
<dbReference type="FunFam" id="3.30.200.20:FF:000053">
    <property type="entry name" value="Tyrosine-protein kinase"/>
    <property type="match status" value="1"/>
</dbReference>
<dbReference type="FunFam" id="3.30.505.10:FF:000023">
    <property type="entry name" value="Tyrosine-protein kinase"/>
    <property type="match status" value="1"/>
</dbReference>
<dbReference type="Gene3D" id="3.30.505.10">
    <property type="entry name" value="SH2 domain"/>
    <property type="match status" value="1"/>
</dbReference>
<dbReference type="Gene3D" id="2.30.30.40">
    <property type="entry name" value="SH3 Domains"/>
    <property type="match status" value="1"/>
</dbReference>
<dbReference type="Gene3D" id="1.10.510.10">
    <property type="entry name" value="Transferase(Phosphotransferase) domain 1"/>
    <property type="match status" value="1"/>
</dbReference>
<dbReference type="InterPro" id="IPR035027">
    <property type="entry name" value="Csk-like_SH2"/>
</dbReference>
<dbReference type="InterPro" id="IPR011009">
    <property type="entry name" value="Kinase-like_dom_sf"/>
</dbReference>
<dbReference type="InterPro" id="IPR050198">
    <property type="entry name" value="Non-receptor_tyrosine_kinases"/>
</dbReference>
<dbReference type="InterPro" id="IPR000719">
    <property type="entry name" value="Prot_kinase_dom"/>
</dbReference>
<dbReference type="InterPro" id="IPR017441">
    <property type="entry name" value="Protein_kinase_ATP_BS"/>
</dbReference>
<dbReference type="InterPro" id="IPR001245">
    <property type="entry name" value="Ser-Thr/Tyr_kinase_cat_dom"/>
</dbReference>
<dbReference type="InterPro" id="IPR000980">
    <property type="entry name" value="SH2"/>
</dbReference>
<dbReference type="InterPro" id="IPR036860">
    <property type="entry name" value="SH2_dom_sf"/>
</dbReference>
<dbReference type="InterPro" id="IPR036028">
    <property type="entry name" value="SH3-like_dom_sf"/>
</dbReference>
<dbReference type="InterPro" id="IPR001452">
    <property type="entry name" value="SH3_domain"/>
</dbReference>
<dbReference type="InterPro" id="IPR008266">
    <property type="entry name" value="Tyr_kinase_AS"/>
</dbReference>
<dbReference type="InterPro" id="IPR020635">
    <property type="entry name" value="Tyr_kinase_cat_dom"/>
</dbReference>
<dbReference type="PANTHER" id="PTHR24418">
    <property type="entry name" value="TYROSINE-PROTEIN KINASE"/>
    <property type="match status" value="1"/>
</dbReference>
<dbReference type="Pfam" id="PF07714">
    <property type="entry name" value="PK_Tyr_Ser-Thr"/>
    <property type="match status" value="1"/>
</dbReference>
<dbReference type="Pfam" id="PF00017">
    <property type="entry name" value="SH2"/>
    <property type="match status" value="1"/>
</dbReference>
<dbReference type="Pfam" id="PF00018">
    <property type="entry name" value="SH3_1"/>
    <property type="match status" value="1"/>
</dbReference>
<dbReference type="PRINTS" id="PR00401">
    <property type="entry name" value="SH2DOMAIN"/>
</dbReference>
<dbReference type="PRINTS" id="PR00109">
    <property type="entry name" value="TYRKINASE"/>
</dbReference>
<dbReference type="SMART" id="SM00252">
    <property type="entry name" value="SH2"/>
    <property type="match status" value="1"/>
</dbReference>
<dbReference type="SMART" id="SM00326">
    <property type="entry name" value="SH3"/>
    <property type="match status" value="1"/>
</dbReference>
<dbReference type="SMART" id="SM00219">
    <property type="entry name" value="TyrKc"/>
    <property type="match status" value="1"/>
</dbReference>
<dbReference type="SUPFAM" id="SSF56112">
    <property type="entry name" value="Protein kinase-like (PK-like)"/>
    <property type="match status" value="1"/>
</dbReference>
<dbReference type="SUPFAM" id="SSF55550">
    <property type="entry name" value="SH2 domain"/>
    <property type="match status" value="1"/>
</dbReference>
<dbReference type="SUPFAM" id="SSF50044">
    <property type="entry name" value="SH3-domain"/>
    <property type="match status" value="1"/>
</dbReference>
<dbReference type="PROSITE" id="PS00107">
    <property type="entry name" value="PROTEIN_KINASE_ATP"/>
    <property type="match status" value="1"/>
</dbReference>
<dbReference type="PROSITE" id="PS50011">
    <property type="entry name" value="PROTEIN_KINASE_DOM"/>
    <property type="match status" value="1"/>
</dbReference>
<dbReference type="PROSITE" id="PS00109">
    <property type="entry name" value="PROTEIN_KINASE_TYR"/>
    <property type="match status" value="1"/>
</dbReference>
<dbReference type="PROSITE" id="PS50001">
    <property type="entry name" value="SH2"/>
    <property type="match status" value="1"/>
</dbReference>
<dbReference type="PROSITE" id="PS50002">
    <property type="entry name" value="SH3"/>
    <property type="match status" value="1"/>
</dbReference>